<name>VATD_SCHPO</name>
<comment type="function">
    <text evidence="1">Subunit of the V1 complex of vacuolar(H+)-ATPase (V-ATPase), a multisubunit enzyme composed of a peripheral complex (V1) that hydrolyzes ATP and a membrane integral complex (V0) that translocates protons (By similarity). V-ATPase is responsible for acidifying and maintaining the pH of intracellular compartments (By similarity).</text>
</comment>
<comment type="subunit">
    <text evidence="1">V-ATPase is a heteromultimeric enzyme composed of a peripheral catalytic V1 complex (components A to H) attached to an integral membrane V0 proton pore complex (components: a, c, c', c'', d, e, f and VOA1).</text>
</comment>
<comment type="subcellular location">
    <subcellularLocation>
        <location evidence="3">Vacuole membrane</location>
        <topology evidence="5">Peripheral membrane protein</topology>
        <orientation evidence="5">Cytoplasmic side</orientation>
    </subcellularLocation>
</comment>
<comment type="similarity">
    <text evidence="5">Belongs to the V-ATPase D subunit family.</text>
</comment>
<gene>
    <name type="primary">vma8</name>
    <name type="ORF">SPCC965.03</name>
</gene>
<keyword id="KW-0375">Hydrogen ion transport</keyword>
<keyword id="KW-0406">Ion transport</keyword>
<keyword id="KW-0472">Membrane</keyword>
<keyword id="KW-0597">Phosphoprotein</keyword>
<keyword id="KW-1185">Reference proteome</keyword>
<keyword id="KW-0813">Transport</keyword>
<keyword id="KW-0926">Vacuole</keyword>
<reference key="1">
    <citation type="journal article" date="2002" name="Nature">
        <title>The genome sequence of Schizosaccharomyces pombe.</title>
        <authorList>
            <person name="Wood V."/>
            <person name="Gwilliam R."/>
            <person name="Rajandream M.A."/>
            <person name="Lyne M.H."/>
            <person name="Lyne R."/>
            <person name="Stewart A."/>
            <person name="Sgouros J.G."/>
            <person name="Peat N."/>
            <person name="Hayles J."/>
            <person name="Baker S.G."/>
            <person name="Basham D."/>
            <person name="Bowman S."/>
            <person name="Brooks K."/>
            <person name="Brown D."/>
            <person name="Brown S."/>
            <person name="Chillingworth T."/>
            <person name="Churcher C.M."/>
            <person name="Collins M."/>
            <person name="Connor R."/>
            <person name="Cronin A."/>
            <person name="Davis P."/>
            <person name="Feltwell T."/>
            <person name="Fraser A."/>
            <person name="Gentles S."/>
            <person name="Goble A."/>
            <person name="Hamlin N."/>
            <person name="Harris D.E."/>
            <person name="Hidalgo J."/>
            <person name="Hodgson G."/>
            <person name="Holroyd S."/>
            <person name="Hornsby T."/>
            <person name="Howarth S."/>
            <person name="Huckle E.J."/>
            <person name="Hunt S."/>
            <person name="Jagels K."/>
            <person name="James K.D."/>
            <person name="Jones L."/>
            <person name="Jones M."/>
            <person name="Leather S."/>
            <person name="McDonald S."/>
            <person name="McLean J."/>
            <person name="Mooney P."/>
            <person name="Moule S."/>
            <person name="Mungall K.L."/>
            <person name="Murphy L.D."/>
            <person name="Niblett D."/>
            <person name="Odell C."/>
            <person name="Oliver K."/>
            <person name="O'Neil S."/>
            <person name="Pearson D."/>
            <person name="Quail M.A."/>
            <person name="Rabbinowitsch E."/>
            <person name="Rutherford K.M."/>
            <person name="Rutter S."/>
            <person name="Saunders D."/>
            <person name="Seeger K."/>
            <person name="Sharp S."/>
            <person name="Skelton J."/>
            <person name="Simmonds M.N."/>
            <person name="Squares R."/>
            <person name="Squares S."/>
            <person name="Stevens K."/>
            <person name="Taylor K."/>
            <person name="Taylor R.G."/>
            <person name="Tivey A."/>
            <person name="Walsh S.V."/>
            <person name="Warren T."/>
            <person name="Whitehead S."/>
            <person name="Woodward J.R."/>
            <person name="Volckaert G."/>
            <person name="Aert R."/>
            <person name="Robben J."/>
            <person name="Grymonprez B."/>
            <person name="Weltjens I."/>
            <person name="Vanstreels E."/>
            <person name="Rieger M."/>
            <person name="Schaefer M."/>
            <person name="Mueller-Auer S."/>
            <person name="Gabel C."/>
            <person name="Fuchs M."/>
            <person name="Duesterhoeft A."/>
            <person name="Fritzc C."/>
            <person name="Holzer E."/>
            <person name="Moestl D."/>
            <person name="Hilbert H."/>
            <person name="Borzym K."/>
            <person name="Langer I."/>
            <person name="Beck A."/>
            <person name="Lehrach H."/>
            <person name="Reinhardt R."/>
            <person name="Pohl T.M."/>
            <person name="Eger P."/>
            <person name="Zimmermann W."/>
            <person name="Wedler H."/>
            <person name="Wambutt R."/>
            <person name="Purnelle B."/>
            <person name="Goffeau A."/>
            <person name="Cadieu E."/>
            <person name="Dreano S."/>
            <person name="Gloux S."/>
            <person name="Lelaure V."/>
            <person name="Mottier S."/>
            <person name="Galibert F."/>
            <person name="Aves S.J."/>
            <person name="Xiang Z."/>
            <person name="Hunt C."/>
            <person name="Moore K."/>
            <person name="Hurst S.M."/>
            <person name="Lucas M."/>
            <person name="Rochet M."/>
            <person name="Gaillardin C."/>
            <person name="Tallada V.A."/>
            <person name="Garzon A."/>
            <person name="Thode G."/>
            <person name="Daga R.R."/>
            <person name="Cruzado L."/>
            <person name="Jimenez J."/>
            <person name="Sanchez M."/>
            <person name="del Rey F."/>
            <person name="Benito J."/>
            <person name="Dominguez A."/>
            <person name="Revuelta J.L."/>
            <person name="Moreno S."/>
            <person name="Armstrong J."/>
            <person name="Forsburg S.L."/>
            <person name="Cerutti L."/>
            <person name="Lowe T."/>
            <person name="McCombie W.R."/>
            <person name="Paulsen I."/>
            <person name="Potashkin J."/>
            <person name="Shpakovski G.V."/>
            <person name="Ussery D."/>
            <person name="Barrell B.G."/>
            <person name="Nurse P."/>
        </authorList>
    </citation>
    <scope>NUCLEOTIDE SEQUENCE [LARGE SCALE GENOMIC DNA]</scope>
    <source>
        <strain>972 / ATCC 24843</strain>
    </source>
</reference>
<reference key="2">
    <citation type="journal article" date="2006" name="Nat. Biotechnol.">
        <title>ORFeome cloning and global analysis of protein localization in the fission yeast Schizosaccharomyces pombe.</title>
        <authorList>
            <person name="Matsuyama A."/>
            <person name="Arai R."/>
            <person name="Yashiroda Y."/>
            <person name="Shirai A."/>
            <person name="Kamata A."/>
            <person name="Sekido S."/>
            <person name="Kobayashi Y."/>
            <person name="Hashimoto A."/>
            <person name="Hamamoto M."/>
            <person name="Hiraoka Y."/>
            <person name="Horinouchi S."/>
            <person name="Yoshida M."/>
        </authorList>
    </citation>
    <scope>SUBCELLULAR LOCATION [LARGE SCALE ANALYSIS]</scope>
</reference>
<reference key="3">
    <citation type="journal article" date="2008" name="J. Proteome Res.">
        <title>Phosphoproteome analysis of fission yeast.</title>
        <authorList>
            <person name="Wilson-Grady J.T."/>
            <person name="Villen J."/>
            <person name="Gygi S.P."/>
        </authorList>
    </citation>
    <scope>PHOSPHORYLATION [LARGE SCALE ANALYSIS] AT SER-219</scope>
    <scope>IDENTIFICATION BY MASS SPECTROMETRY</scope>
</reference>
<sequence length="285" mass="32219">MASKQRENVFPTRMTLTTMKTRLKGAQTGHSLLKRKSEALKKRFREIVVNIEQAKQKMGRVMQIAAFSMAEVGFAMGNNINFEIQQSVKQPRLRVRSKQENISGVFLPTFEMNLDESIDDFQLTGLGKGGQQIQKARQVYEKAVETLVQLASYQSAFVLLGDVLQMTNRRVNSIEHIIIPRLENTIKYIESELEELEREDFTRLKKVQKTKENAEKADSVTKEEHQGGSNTLQQTKDVGGAIAPAAEVGKEVINEVENSKDDTYSLPSTSTDDEEENDSDEEVIF</sequence>
<protein>
    <recommendedName>
        <fullName>V-type proton ATPase subunit D</fullName>
        <shortName>V-ATPase subunit D</shortName>
    </recommendedName>
    <alternativeName>
        <fullName>Vacuolar proton pump subunit D</fullName>
    </alternativeName>
</protein>
<proteinExistence type="evidence at protein level"/>
<feature type="chain" id="PRO_0000144243" description="V-type proton ATPase subunit D">
    <location>
        <begin position="1"/>
        <end position="285"/>
    </location>
</feature>
<feature type="region of interest" description="Disordered" evidence="2">
    <location>
        <begin position="208"/>
        <end position="285"/>
    </location>
</feature>
<feature type="compositionally biased region" description="Basic and acidic residues" evidence="2">
    <location>
        <begin position="208"/>
        <end position="226"/>
    </location>
</feature>
<feature type="compositionally biased region" description="Polar residues" evidence="2">
    <location>
        <begin position="227"/>
        <end position="236"/>
    </location>
</feature>
<feature type="compositionally biased region" description="Basic and acidic residues" evidence="2">
    <location>
        <begin position="248"/>
        <end position="263"/>
    </location>
</feature>
<feature type="compositionally biased region" description="Acidic residues" evidence="2">
    <location>
        <begin position="271"/>
        <end position="285"/>
    </location>
</feature>
<feature type="modified residue" description="Phosphoserine" evidence="4">
    <location>
        <position position="219"/>
    </location>
</feature>
<organism>
    <name type="scientific">Schizosaccharomyces pombe (strain 972 / ATCC 24843)</name>
    <name type="common">Fission yeast</name>
    <dbReference type="NCBI Taxonomy" id="284812"/>
    <lineage>
        <taxon>Eukaryota</taxon>
        <taxon>Fungi</taxon>
        <taxon>Dikarya</taxon>
        <taxon>Ascomycota</taxon>
        <taxon>Taphrinomycotina</taxon>
        <taxon>Schizosaccharomycetes</taxon>
        <taxon>Schizosaccharomycetales</taxon>
        <taxon>Schizosaccharomycetaceae</taxon>
        <taxon>Schizosaccharomyces</taxon>
    </lineage>
</organism>
<dbReference type="EMBL" id="CU329672">
    <property type="protein sequence ID" value="CAA19063.1"/>
    <property type="molecule type" value="Genomic_DNA"/>
</dbReference>
<dbReference type="PIR" id="T41656">
    <property type="entry name" value="T41656"/>
</dbReference>
<dbReference type="RefSeq" id="NP_588513.1">
    <property type="nucleotide sequence ID" value="NM_001023502.2"/>
</dbReference>
<dbReference type="SMR" id="O59823"/>
<dbReference type="BioGRID" id="276140">
    <property type="interactions" value="5"/>
</dbReference>
<dbReference type="FunCoup" id="O59823">
    <property type="interactions" value="295"/>
</dbReference>
<dbReference type="STRING" id="284812.O59823"/>
<dbReference type="iPTMnet" id="O59823"/>
<dbReference type="PaxDb" id="4896-SPCC965.03.1"/>
<dbReference type="EnsemblFungi" id="SPCC965.03.1">
    <property type="protein sequence ID" value="SPCC965.03.1:pep"/>
    <property type="gene ID" value="SPCC965.03"/>
</dbReference>
<dbReference type="GeneID" id="2539581"/>
<dbReference type="KEGG" id="spo:2539581"/>
<dbReference type="PomBase" id="SPCC965.03">
    <property type="gene designation" value="vma8"/>
</dbReference>
<dbReference type="VEuPathDB" id="FungiDB:SPCC965.03"/>
<dbReference type="eggNOG" id="KOG1647">
    <property type="taxonomic scope" value="Eukaryota"/>
</dbReference>
<dbReference type="HOGENOM" id="CLU_069688_0_1_1"/>
<dbReference type="InParanoid" id="O59823"/>
<dbReference type="OMA" id="REEFFRM"/>
<dbReference type="PhylomeDB" id="O59823"/>
<dbReference type="Reactome" id="R-SPO-1222556">
    <property type="pathway name" value="ROS and RNS production in phagocytes"/>
</dbReference>
<dbReference type="Reactome" id="R-SPO-6798695">
    <property type="pathway name" value="Neutrophil degranulation"/>
</dbReference>
<dbReference type="Reactome" id="R-SPO-77387">
    <property type="pathway name" value="Insulin receptor recycling"/>
</dbReference>
<dbReference type="Reactome" id="R-SPO-917977">
    <property type="pathway name" value="Transferrin endocytosis and recycling"/>
</dbReference>
<dbReference type="Reactome" id="R-SPO-9639288">
    <property type="pathway name" value="Amino acids regulate mTORC1"/>
</dbReference>
<dbReference type="PRO" id="PR:O59823"/>
<dbReference type="Proteomes" id="UP000002485">
    <property type="component" value="Chromosome III"/>
</dbReference>
<dbReference type="GO" id="GO:0032153">
    <property type="term" value="C:cell division site"/>
    <property type="evidence" value="ECO:0007005"/>
    <property type="project" value="PomBase"/>
</dbReference>
<dbReference type="GO" id="GO:0005829">
    <property type="term" value="C:cytosol"/>
    <property type="evidence" value="ECO:0007005"/>
    <property type="project" value="PomBase"/>
</dbReference>
<dbReference type="GO" id="GO:0000329">
    <property type="term" value="C:fungal-type vacuole membrane"/>
    <property type="evidence" value="ECO:0007005"/>
    <property type="project" value="PomBase"/>
</dbReference>
<dbReference type="GO" id="GO:0016471">
    <property type="term" value="C:vacuolar proton-transporting V-type ATPase complex"/>
    <property type="evidence" value="ECO:0000318"/>
    <property type="project" value="GO_Central"/>
</dbReference>
<dbReference type="GO" id="GO:0000221">
    <property type="term" value="C:vacuolar proton-transporting V-type ATPase, V1 domain"/>
    <property type="evidence" value="ECO:0000266"/>
    <property type="project" value="PomBase"/>
</dbReference>
<dbReference type="GO" id="GO:0016887">
    <property type="term" value="F:ATP hydrolysis activity"/>
    <property type="evidence" value="ECO:0000305"/>
    <property type="project" value="PomBase"/>
</dbReference>
<dbReference type="GO" id="GO:0046961">
    <property type="term" value="F:proton-transporting ATPase activity, rotational mechanism"/>
    <property type="evidence" value="ECO:0007669"/>
    <property type="project" value="InterPro"/>
</dbReference>
<dbReference type="GO" id="GO:1902600">
    <property type="term" value="P:proton transmembrane transport"/>
    <property type="evidence" value="ECO:0000305"/>
    <property type="project" value="PomBase"/>
</dbReference>
<dbReference type="GO" id="GO:0007035">
    <property type="term" value="P:vacuolar acidification"/>
    <property type="evidence" value="ECO:0000318"/>
    <property type="project" value="GO_Central"/>
</dbReference>
<dbReference type="Gene3D" id="1.10.287.3240">
    <property type="match status" value="1"/>
</dbReference>
<dbReference type="HAMAP" id="MF_00271">
    <property type="entry name" value="ATP_synth_D_arch"/>
    <property type="match status" value="1"/>
</dbReference>
<dbReference type="InterPro" id="IPR002699">
    <property type="entry name" value="V_ATPase_D"/>
</dbReference>
<dbReference type="NCBIfam" id="TIGR00309">
    <property type="entry name" value="V_ATPase_subD"/>
    <property type="match status" value="1"/>
</dbReference>
<dbReference type="PANTHER" id="PTHR11671">
    <property type="entry name" value="V-TYPE ATP SYNTHASE SUBUNIT D"/>
    <property type="match status" value="1"/>
</dbReference>
<dbReference type="Pfam" id="PF01813">
    <property type="entry name" value="ATP-synt_D"/>
    <property type="match status" value="1"/>
</dbReference>
<accession>O59823</accession>
<evidence type="ECO:0000250" key="1">
    <source>
        <dbReference type="UniProtKB" id="P32610"/>
    </source>
</evidence>
<evidence type="ECO:0000256" key="2">
    <source>
        <dbReference type="SAM" id="MobiDB-lite"/>
    </source>
</evidence>
<evidence type="ECO:0000269" key="3">
    <source>
    </source>
</evidence>
<evidence type="ECO:0000269" key="4">
    <source>
    </source>
</evidence>
<evidence type="ECO:0000305" key="5"/>